<proteinExistence type="evidence at transcript level"/>
<reference key="1">
    <citation type="submission" date="2006-08" db="EMBL/GenBank/DDBJ databases">
        <authorList>
            <consortium name="NIH - Mammalian Gene Collection (MGC) project"/>
        </authorList>
    </citation>
    <scope>NUCLEOTIDE SEQUENCE [LARGE SCALE MRNA]</scope>
    <source>
        <strain>Hereford</strain>
        <tissue>Ascending colon</tissue>
        <tissue>Brain cortex</tissue>
        <tissue>Rumen</tissue>
    </source>
</reference>
<keyword id="KW-0007">Acetylation</keyword>
<keyword id="KW-0010">Activator</keyword>
<keyword id="KW-0131">Cell cycle</keyword>
<keyword id="KW-0156">Chromatin regulator</keyword>
<keyword id="KW-0963">Cytoplasm</keyword>
<keyword id="KW-0378">Hydrolase</keyword>
<keyword id="KW-0479">Metal-binding</keyword>
<keyword id="KW-0539">Nucleus</keyword>
<keyword id="KW-0597">Phosphoprotein</keyword>
<keyword id="KW-0645">Protease</keyword>
<keyword id="KW-1185">Reference proteome</keyword>
<keyword id="KW-0788">Thiol protease</keyword>
<keyword id="KW-0804">Transcription</keyword>
<keyword id="KW-0805">Transcription regulation</keyword>
<keyword id="KW-0832">Ubl conjugation</keyword>
<keyword id="KW-0833">Ubl conjugation pathway</keyword>
<keyword id="KW-0862">Zinc</keyword>
<keyword id="KW-0863">Zinc-finger</keyword>
<feature type="chain" id="PRO_0000367510" description="Ubiquitin carboxyl-terminal hydrolase 22">
    <location>
        <begin position="1"/>
        <end position="514"/>
    </location>
</feature>
<feature type="domain" description="USP">
    <location>
        <begin position="165"/>
        <end position="509"/>
    </location>
</feature>
<feature type="zinc finger region" description="UBP-type" evidence="3">
    <location>
        <begin position="10"/>
        <end position="127"/>
    </location>
</feature>
<feature type="active site" description="Nucleophile" evidence="4 5">
    <location>
        <position position="174"/>
    </location>
</feature>
<feature type="active site" description="Proton acceptor" evidence="4 5">
    <location>
        <position position="468"/>
    </location>
</feature>
<feature type="binding site" evidence="3">
    <location>
        <position position="12"/>
    </location>
    <ligand>
        <name>Zn(2+)</name>
        <dbReference type="ChEBI" id="CHEBI:29105"/>
        <label>1</label>
    </ligand>
</feature>
<feature type="binding site" evidence="3">
    <location>
        <position position="14"/>
    </location>
    <ligand>
        <name>Zn(2+)</name>
        <dbReference type="ChEBI" id="CHEBI:29105"/>
        <label>1</label>
    </ligand>
</feature>
<feature type="binding site" evidence="3">
    <location>
        <position position="52"/>
    </location>
    <ligand>
        <name>Zn(2+)</name>
        <dbReference type="ChEBI" id="CHEBI:29105"/>
        <label>2</label>
    </ligand>
</feature>
<feature type="binding site" evidence="3">
    <location>
        <position position="55"/>
    </location>
    <ligand>
        <name>Zn(2+)</name>
        <dbReference type="ChEBI" id="CHEBI:29105"/>
        <label>2</label>
    </ligand>
</feature>
<feature type="binding site" evidence="3">
    <location>
        <position position="65"/>
    </location>
    <ligand>
        <name>Zn(2+)</name>
        <dbReference type="ChEBI" id="CHEBI:29105"/>
        <label>3</label>
    </ligand>
</feature>
<feature type="binding site" evidence="3">
    <location>
        <position position="68"/>
    </location>
    <ligand>
        <name>Zn(2+)</name>
        <dbReference type="ChEBI" id="CHEBI:29105"/>
        <label>3</label>
    </ligand>
</feature>
<feature type="binding site" evidence="3">
    <location>
        <position position="73"/>
    </location>
    <ligand>
        <name>Zn(2+)</name>
        <dbReference type="ChEBI" id="CHEBI:29105"/>
        <label>2</label>
    </ligand>
</feature>
<feature type="binding site" evidence="3">
    <location>
        <position position="78"/>
    </location>
    <ligand>
        <name>Zn(2+)</name>
        <dbReference type="ChEBI" id="CHEBI:29105"/>
        <label>2</label>
    </ligand>
</feature>
<feature type="binding site" evidence="3">
    <location>
        <position position="82"/>
    </location>
    <ligand>
        <name>Zn(2+)</name>
        <dbReference type="ChEBI" id="CHEBI:29105"/>
        <label>3</label>
    </ligand>
</feature>
<feature type="binding site" evidence="3">
    <location>
        <position position="88"/>
    </location>
    <ligand>
        <name>Zn(2+)</name>
        <dbReference type="ChEBI" id="CHEBI:29105"/>
        <label>3</label>
    </ligand>
</feature>
<feature type="binding site" evidence="3">
    <location>
        <position position="101"/>
    </location>
    <ligand>
        <name>Zn(2+)</name>
        <dbReference type="ChEBI" id="CHEBI:29105"/>
        <label>1</label>
    </ligand>
</feature>
<feature type="binding site" evidence="3">
    <location>
        <position position="104"/>
    </location>
    <ligand>
        <name>Zn(2+)</name>
        <dbReference type="ChEBI" id="CHEBI:29105"/>
        <label>1</label>
    </ligand>
</feature>
<feature type="modified residue" description="N6-acetyllysine" evidence="2">
    <location>
        <position position="118"/>
    </location>
</feature>
<feature type="modified residue" description="Phosphothreonine" evidence="2">
    <location>
        <position position="136"/>
    </location>
</feature>
<feature type="modified residue" description="Phosphoserine" evidence="2">
    <location>
        <position position="226"/>
    </location>
</feature>
<evidence type="ECO:0000250" key="1">
    <source>
        <dbReference type="UniProtKB" id="Q5DU02"/>
    </source>
</evidence>
<evidence type="ECO:0000250" key="2">
    <source>
        <dbReference type="UniProtKB" id="Q9UPT9"/>
    </source>
</evidence>
<evidence type="ECO:0000255" key="3">
    <source>
        <dbReference type="PROSITE-ProRule" id="PRU00502"/>
    </source>
</evidence>
<evidence type="ECO:0000255" key="4">
    <source>
        <dbReference type="PROSITE-ProRule" id="PRU10092"/>
    </source>
</evidence>
<evidence type="ECO:0000255" key="5">
    <source>
        <dbReference type="PROSITE-ProRule" id="PRU10093"/>
    </source>
</evidence>
<evidence type="ECO:0000305" key="6"/>
<comment type="function">
    <text evidence="1 2">Deubiquitinase that plays a role in several cellular processes including transcriptional regulation, cell cycle progression or innate immunity. As part of the transcription regulatory histone acetylation (HAT) complex SAGA, catalyzes the deubiquitination of both histones H2A and H2B, thereby acting as a transcriptional coactivator. Recruited to specific gene promoters by activators such as MYC, where it is required for transcription. Facilitates cell-cycle progression by stabilizing CCNB1 and antagonizing its proteasome-mediated degradation in a cell cycle-specific manner. Modulates cell cycle progression and apoptosis also by antagonizing TP53 transcriptional activation through deacetylase SIRT1 stabilization. Plays multiple roles in immunity and inflammation. Participates in antiviral response by deubiquitinating the importin KPNA2, leading to IRF3 nuclear translocation and subsequent type I interferon production. Acts as a central regulator of type III IFN signaling by negatively regulating STING1 activation and ubiquitination (By similarity). Inhibits NLRP3 inflammasome activation by promoting NLRP3 degradation through ATG5-dependent autophagy (By similarity). Deubiquitinates CD274 to induce its stabilization and thereby participates in maintenance of immune tolerance to self. Controls necroptotic cell death by regulating RIPK3 phosphorylation and ubiquitination (By similarity). During bacterial infection, promotes pro-inflammatory response by targeting TRAF6 and removing its 'Lys-48'-linked polyubiquitination (By similarity).</text>
</comment>
<comment type="catalytic activity">
    <reaction evidence="2">
        <text>Thiol-dependent hydrolysis of ester, thioester, amide, peptide and isopeptide bonds formed by the C-terminal Gly of ubiquitin (a 76-residue protein attached to proteins as an intracellular targeting signal).</text>
        <dbReference type="EC" id="3.4.19.12"/>
    </reaction>
</comment>
<comment type="subunit">
    <text evidence="1 2">Component of some SAGA transcription coactivator-HAT complexes, at least composed of ATXN7, ATXN7L3, ENY2, GCN5L2, SUPT3H, TAF10, TRRAP and USP22. Within the SAGA complex, ATXN7L3, ENY2 and USP22 form a subcomplex required for histone deubiquitination. Interacts directly with ATXN7L3; leading to its recruitment to the SAGA complex. Interacts with ATXN7L3 and weakly with ATXN7L3B. Interacts with MED1 (By similarity).</text>
</comment>
<comment type="subcellular location">
    <subcellularLocation>
        <location evidence="2">Nucleus</location>
    </subcellularLocation>
    <subcellularLocation>
        <location evidence="1">Cytoplasm</location>
    </subcellularLocation>
</comment>
<comment type="PTM">
    <text evidence="2">Phosphorylated in G2/M phase, but not in G1 phase by CDK1.</text>
</comment>
<comment type="PTM">
    <text evidence="2">Ubiquitinated and subsequently degraded in a CDC20-dependent manner.</text>
</comment>
<comment type="similarity">
    <text evidence="6">Belongs to the peptidase C19 family. UBP8 subfamily.</text>
</comment>
<dbReference type="EC" id="3.4.19.12"/>
<dbReference type="EMBL" id="EE333442">
    <property type="status" value="NOT_ANNOTATED_CDS"/>
    <property type="molecule type" value="mRNA"/>
</dbReference>
<dbReference type="EMBL" id="EH202007">
    <property type="status" value="NOT_ANNOTATED_CDS"/>
    <property type="molecule type" value="mRNA"/>
</dbReference>
<dbReference type="EMBL" id="EV691513">
    <property type="status" value="NOT_ANNOTATED_CDS"/>
    <property type="molecule type" value="mRNA"/>
</dbReference>
<dbReference type="RefSeq" id="NP_001160039.1">
    <property type="nucleotide sequence ID" value="NM_001166567.1"/>
</dbReference>
<dbReference type="SMR" id="P0C8Z3"/>
<dbReference type="FunCoup" id="P0C8Z3">
    <property type="interactions" value="4877"/>
</dbReference>
<dbReference type="STRING" id="9913.ENSBTAP00000011818"/>
<dbReference type="PaxDb" id="9913-ENSBTAP00000011818"/>
<dbReference type="GeneID" id="509694"/>
<dbReference type="KEGG" id="bta:509694"/>
<dbReference type="CTD" id="23326"/>
<dbReference type="VEuPathDB" id="HostDB:ENSBTAG00000008978"/>
<dbReference type="eggNOG" id="KOG1867">
    <property type="taxonomic scope" value="Eukaryota"/>
</dbReference>
<dbReference type="HOGENOM" id="CLU_008279_11_0_1"/>
<dbReference type="InParanoid" id="P0C8Z3"/>
<dbReference type="OMA" id="NVSCNCI"/>
<dbReference type="OrthoDB" id="47475at2759"/>
<dbReference type="TreeFam" id="TF323554"/>
<dbReference type="Reactome" id="R-BTA-5689880">
    <property type="pathway name" value="Ub-specific processing proteases"/>
</dbReference>
<dbReference type="Proteomes" id="UP000009136">
    <property type="component" value="Chromosome 19"/>
</dbReference>
<dbReference type="Bgee" id="ENSBTAG00000008978">
    <property type="expression patterns" value="Expressed in floor plate of diencephalon and 104 other cell types or tissues"/>
</dbReference>
<dbReference type="GO" id="GO:0005737">
    <property type="term" value="C:cytoplasm"/>
    <property type="evidence" value="ECO:0007669"/>
    <property type="project" value="UniProtKB-SubCell"/>
</dbReference>
<dbReference type="GO" id="GO:0005634">
    <property type="term" value="C:nucleus"/>
    <property type="evidence" value="ECO:0007669"/>
    <property type="project" value="UniProtKB-SubCell"/>
</dbReference>
<dbReference type="GO" id="GO:0000124">
    <property type="term" value="C:SAGA complex"/>
    <property type="evidence" value="ECO:0000250"/>
    <property type="project" value="UniProtKB"/>
</dbReference>
<dbReference type="GO" id="GO:0004843">
    <property type="term" value="F:cysteine-type deubiquitinase activity"/>
    <property type="evidence" value="ECO:0007669"/>
    <property type="project" value="UniProtKB-EC"/>
</dbReference>
<dbReference type="GO" id="GO:0008270">
    <property type="term" value="F:zinc ion binding"/>
    <property type="evidence" value="ECO:0007669"/>
    <property type="project" value="UniProtKB-KW"/>
</dbReference>
<dbReference type="GO" id="GO:0006325">
    <property type="term" value="P:chromatin organization"/>
    <property type="evidence" value="ECO:0007669"/>
    <property type="project" value="UniProtKB-KW"/>
</dbReference>
<dbReference type="GO" id="GO:0016579">
    <property type="term" value="P:protein deubiquitination"/>
    <property type="evidence" value="ECO:0007669"/>
    <property type="project" value="InterPro"/>
</dbReference>
<dbReference type="GO" id="GO:0006508">
    <property type="term" value="P:proteolysis"/>
    <property type="evidence" value="ECO:0007669"/>
    <property type="project" value="UniProtKB-KW"/>
</dbReference>
<dbReference type="CDD" id="cd02660">
    <property type="entry name" value="Peptidase_C19D"/>
    <property type="match status" value="1"/>
</dbReference>
<dbReference type="FunFam" id="3.30.40.10:FF:000141">
    <property type="entry name" value="Ubiquitinyl hydrolase 1"/>
    <property type="match status" value="1"/>
</dbReference>
<dbReference type="FunFam" id="3.90.70.10:FF:000011">
    <property type="entry name" value="Ubiquitinyl hydrolase 1"/>
    <property type="match status" value="1"/>
</dbReference>
<dbReference type="Gene3D" id="3.90.70.10">
    <property type="entry name" value="Cysteine proteinases"/>
    <property type="match status" value="1"/>
</dbReference>
<dbReference type="Gene3D" id="3.30.40.10">
    <property type="entry name" value="Zinc/RING finger domain, C3HC4 (zinc finger)"/>
    <property type="match status" value="1"/>
</dbReference>
<dbReference type="InterPro" id="IPR038765">
    <property type="entry name" value="Papain-like_cys_pep_sf"/>
</dbReference>
<dbReference type="InterPro" id="IPR001394">
    <property type="entry name" value="Peptidase_C19_UCH"/>
</dbReference>
<dbReference type="InterPro" id="IPR050185">
    <property type="entry name" value="Ub_carboxyl-term_hydrolase"/>
</dbReference>
<dbReference type="InterPro" id="IPR018200">
    <property type="entry name" value="USP_CS"/>
</dbReference>
<dbReference type="InterPro" id="IPR028889">
    <property type="entry name" value="USP_dom"/>
</dbReference>
<dbReference type="InterPro" id="IPR013083">
    <property type="entry name" value="Znf_RING/FYVE/PHD"/>
</dbReference>
<dbReference type="InterPro" id="IPR001607">
    <property type="entry name" value="Znf_UBP"/>
</dbReference>
<dbReference type="PANTHER" id="PTHR21646">
    <property type="entry name" value="UBIQUITIN CARBOXYL-TERMINAL HYDROLASE"/>
    <property type="match status" value="1"/>
</dbReference>
<dbReference type="PANTHER" id="PTHR21646:SF40">
    <property type="entry name" value="UBIQUITIN CARBOXYL-TERMINAL HYDROLASE 22"/>
    <property type="match status" value="1"/>
</dbReference>
<dbReference type="Pfam" id="PF00443">
    <property type="entry name" value="UCH"/>
    <property type="match status" value="1"/>
</dbReference>
<dbReference type="Pfam" id="PF02148">
    <property type="entry name" value="zf-UBP"/>
    <property type="match status" value="1"/>
</dbReference>
<dbReference type="SUPFAM" id="SSF54001">
    <property type="entry name" value="Cysteine proteinases"/>
    <property type="match status" value="1"/>
</dbReference>
<dbReference type="SUPFAM" id="SSF57850">
    <property type="entry name" value="RING/U-box"/>
    <property type="match status" value="1"/>
</dbReference>
<dbReference type="PROSITE" id="PS00972">
    <property type="entry name" value="USP_1"/>
    <property type="match status" value="1"/>
</dbReference>
<dbReference type="PROSITE" id="PS00973">
    <property type="entry name" value="USP_2"/>
    <property type="match status" value="1"/>
</dbReference>
<dbReference type="PROSITE" id="PS50235">
    <property type="entry name" value="USP_3"/>
    <property type="match status" value="1"/>
</dbReference>
<dbReference type="PROSITE" id="PS50271">
    <property type="entry name" value="ZF_UBP"/>
    <property type="match status" value="1"/>
</dbReference>
<sequence length="514" mass="58737">MDAELVVTPPGCAHLGSFKVDNWKQNLRAIYQCFVWSGSAEARKRKAKSCVCHVCGLHLNRLHSCLHCVFFGCFTKKHIHEHAKSKRHNLAIELMYGGIYCFLCQDYIYDKDIEIIAKEEQRKAWKMQGVGEKFSTWEPTKRELELLKHNPKRRKITSNCTIGLRGLINLGNTCFMNCIVQALTHTPLLRDFFLSDRHRCEMQSPSSCLVCEMSSLFQEFYSGHRSPHIPYKLLHLVWTHARHLAGYEQQDAHEFLIAALDVLHRHCKGDDNGKKANNPNHCNCIIDQIFTGGLQSDVTCQVCHGVSTTIDPFWDISLDLPGSSTPFWPLSPGSESSVVNGESHVSGTTTLTDCLRRFTRPEHLGSSAKIKCSGCHSYQESTKQLTMKKLPIVACFHLKRFEHSAKLRRKITTYVSFPLELDMTPFMASSKESRMNGQYQQPTDSLNNDNKYSLFAVVNHQGTLESGHYTSFIRQHKDQWFKCDDAIITKASIADVLDSEGYLLFYHKQFLEYE</sequence>
<accession>P0C8Z3</accession>
<organism>
    <name type="scientific">Bos taurus</name>
    <name type="common">Bovine</name>
    <dbReference type="NCBI Taxonomy" id="9913"/>
    <lineage>
        <taxon>Eukaryota</taxon>
        <taxon>Metazoa</taxon>
        <taxon>Chordata</taxon>
        <taxon>Craniata</taxon>
        <taxon>Vertebrata</taxon>
        <taxon>Euteleostomi</taxon>
        <taxon>Mammalia</taxon>
        <taxon>Eutheria</taxon>
        <taxon>Laurasiatheria</taxon>
        <taxon>Artiodactyla</taxon>
        <taxon>Ruminantia</taxon>
        <taxon>Pecora</taxon>
        <taxon>Bovidae</taxon>
        <taxon>Bovinae</taxon>
        <taxon>Bos</taxon>
    </lineage>
</organism>
<name>UBP22_BOVIN</name>
<protein>
    <recommendedName>
        <fullName>Ubiquitin carboxyl-terminal hydrolase 22</fullName>
        <ecNumber>3.4.19.12</ecNumber>
    </recommendedName>
    <alternativeName>
        <fullName>Deubiquitinating enzyme 22</fullName>
    </alternativeName>
    <alternativeName>
        <fullName>Ubiquitin thioesterase 22</fullName>
    </alternativeName>
    <alternativeName>
        <fullName>Ubiquitin-specific-processing protease 22</fullName>
    </alternativeName>
</protein>
<gene>
    <name type="primary">USP22</name>
</gene>